<accession>P0CAK6</accession>
<feature type="chain" id="PRO_0000373735" description="Protein L83L">
    <location>
        <begin position="1"/>
        <end position="83"/>
    </location>
</feature>
<feature type="region of interest" description="Disordered" evidence="2">
    <location>
        <begin position="1"/>
        <end position="26"/>
    </location>
</feature>
<gene>
    <name type="ordered locus">Ken-005</name>
</gene>
<evidence type="ECO:0000250" key="1">
    <source>
        <dbReference type="UniProtKB" id="Q65132"/>
    </source>
</evidence>
<evidence type="ECO:0000256" key="2">
    <source>
        <dbReference type="SAM" id="MobiDB-lite"/>
    </source>
</evidence>
<evidence type="ECO:0000305" key="3"/>
<dbReference type="EMBL" id="AY261360">
    <property type="status" value="NOT_ANNOTATED_CDS"/>
    <property type="molecule type" value="Genomic_DNA"/>
</dbReference>
<dbReference type="SMR" id="P0CAK6"/>
<dbReference type="Proteomes" id="UP000000861">
    <property type="component" value="Segment"/>
</dbReference>
<dbReference type="GO" id="GO:0030430">
    <property type="term" value="C:host cell cytoplasm"/>
    <property type="evidence" value="ECO:0007669"/>
    <property type="project" value="UniProtKB-SubCell"/>
</dbReference>
<keyword id="KW-0244">Early protein</keyword>
<keyword id="KW-1035">Host cytoplasm</keyword>
<keyword id="KW-0945">Host-virus interaction</keyword>
<protein>
    <recommendedName>
        <fullName>Protein L83L</fullName>
    </recommendedName>
</protein>
<proteinExistence type="inferred from homology"/>
<reference key="1">
    <citation type="submission" date="2003-03" db="EMBL/GenBank/DDBJ databases">
        <title>African swine fever virus genomes.</title>
        <authorList>
            <person name="Kutish G.F."/>
            <person name="Rock D.L."/>
        </authorList>
    </citation>
    <scope>NUCLEOTIDE SEQUENCE [LARGE SCALE GENOMIC DNA]</scope>
</reference>
<comment type="function">
    <text evidence="1">May subvert the host innate immune response by interacting with host IL1B and interfering with its function.</text>
</comment>
<comment type="subunit">
    <text evidence="1">Interacts with host IL1B.</text>
</comment>
<comment type="subcellular location">
    <subcellularLocation>
        <location evidence="1">Host cytoplasm</location>
    </subcellularLocation>
</comment>
<comment type="induction">
    <text evidence="3">Expressed in the early phase of the viral replicative cycle.</text>
</comment>
<comment type="similarity">
    <text evidence="3">Belongs to the asfivirus L83L family.</text>
</comment>
<organismHost>
    <name type="scientific">Ornithodoros</name>
    <name type="common">relapsing fever ticks</name>
    <dbReference type="NCBI Taxonomy" id="6937"/>
</organismHost>
<organismHost>
    <name type="scientific">Phacochoerus aethiopicus</name>
    <name type="common">Warthog</name>
    <dbReference type="NCBI Taxonomy" id="85517"/>
</organismHost>
<organismHost>
    <name type="scientific">Phacochoerus africanus</name>
    <name type="common">Warthog</name>
    <dbReference type="NCBI Taxonomy" id="41426"/>
</organismHost>
<organismHost>
    <name type="scientific">Potamochoerus larvatus</name>
    <name type="common">Bushpig</name>
    <dbReference type="NCBI Taxonomy" id="273792"/>
</organismHost>
<organismHost>
    <name type="scientific">Sus scrofa</name>
    <name type="common">Pig</name>
    <dbReference type="NCBI Taxonomy" id="9823"/>
</organismHost>
<sequence>MDTSLKKNNGALEADNKNYQNYKDEPDKISDVLDDTKYNSMVECCHKNYSTFAPQWDVKERNYIDVPEGPSAKKSIVHRCTII</sequence>
<name>L83L_ASFK5</name>
<organism>
    <name type="scientific">African swine fever virus (isolate Pig/Kenya/KEN-50/1950)</name>
    <name type="common">ASFV</name>
    <dbReference type="NCBI Taxonomy" id="561445"/>
    <lineage>
        <taxon>Viruses</taxon>
        <taxon>Varidnaviria</taxon>
        <taxon>Bamfordvirae</taxon>
        <taxon>Nucleocytoviricota</taxon>
        <taxon>Pokkesviricetes</taxon>
        <taxon>Asfuvirales</taxon>
        <taxon>Asfarviridae</taxon>
        <taxon>Asfivirus</taxon>
        <taxon>African swine fever virus</taxon>
    </lineage>
</organism>